<gene>
    <name evidence="1" type="primary">secY2</name>
    <name type="ordered locus">Sca_2201</name>
</gene>
<accession>B9DJQ6</accession>
<comment type="function">
    <text evidence="1">Part of the accessory SecA2/SecY2 system specifically required for export of possible cell wall proteins. The central subunit of a protein translocation channel.</text>
</comment>
<comment type="subunit">
    <text evidence="1">Component of the accessory SecA2/SecY2 protein translocase complex required to export cell wall proteins. May form heterotrimers with SecE and SecG subunits.</text>
</comment>
<comment type="subcellular location">
    <subcellularLocation>
        <location evidence="1">Cell membrane</location>
        <topology evidence="1">Multi-pass membrane protein</topology>
    </subcellularLocation>
</comment>
<comment type="similarity">
    <text evidence="1">Belongs to the SecY/SEC61-alpha family. SecY2 subfamily.</text>
</comment>
<protein>
    <recommendedName>
        <fullName evidence="1">Accessory Sec system protein translocase subunit SecY2</fullName>
    </recommendedName>
</protein>
<reference key="1">
    <citation type="journal article" date="2009" name="Appl. Environ. Microbiol.">
        <title>Genome analysis of the meat starter culture bacterium Staphylococcus carnosus TM300.</title>
        <authorList>
            <person name="Rosenstein R."/>
            <person name="Nerz C."/>
            <person name="Biswas L."/>
            <person name="Resch A."/>
            <person name="Raddatz G."/>
            <person name="Schuster S.C."/>
            <person name="Goetz F."/>
        </authorList>
    </citation>
    <scope>NUCLEOTIDE SEQUENCE [LARGE SCALE GENOMIC DNA]</scope>
    <source>
        <strain>TM300</strain>
    </source>
</reference>
<sequence length="370" mass="42403">MKKYLKDYEYKILYKRIIFTCWILLIYIFGTHIPAITTVRTYTAISNFYKMTAANVGGDYQALNVFSLGLGPWLTAMIFMTLFYYRDSDRMMKQTRREKSTKERIFTLILALIQAYFVVFTLLSHVKIDHSEKWLIILVLVTGAMILVWLSDLNMRFGIAGPMPIVMISIIRSIMRQNVALSELGPTLLISAALVLIIILLVLIFIEITEYRLPYLDVMDVSSRREHTYLAWKLNPGGSIAIMISFAAFFVLNSAVNLIVQFFNSKNNGVLNFLDFSTPIGITIFLILQLVLSYGISRLILDPKRKAKDFKKNGDFFPGVEPGKPTYHYLIHKARRISWIGAFIVTIIIGIPLYATLLIPQFSKEIYLSV</sequence>
<name>SECY2_STACT</name>
<feature type="chain" id="PRO_0000414869" description="Accessory Sec system protein translocase subunit SecY2">
    <location>
        <begin position="1"/>
        <end position="370"/>
    </location>
</feature>
<feature type="transmembrane region" description="Helical" evidence="1">
    <location>
        <begin position="17"/>
        <end position="37"/>
    </location>
</feature>
<feature type="transmembrane region" description="Helical" evidence="1">
    <location>
        <begin position="65"/>
        <end position="85"/>
    </location>
</feature>
<feature type="transmembrane region" description="Helical" evidence="1">
    <location>
        <begin position="105"/>
        <end position="125"/>
    </location>
</feature>
<feature type="transmembrane region" description="Helical" evidence="1">
    <location>
        <begin position="134"/>
        <end position="154"/>
    </location>
</feature>
<feature type="transmembrane region" description="Helical" evidence="1">
    <location>
        <begin position="155"/>
        <end position="175"/>
    </location>
</feature>
<feature type="transmembrane region" description="Helical" evidence="1">
    <location>
        <begin position="188"/>
        <end position="208"/>
    </location>
</feature>
<feature type="transmembrane region" description="Helical" evidence="1">
    <location>
        <begin position="240"/>
        <end position="260"/>
    </location>
</feature>
<feature type="transmembrane region" description="Helical" evidence="1">
    <location>
        <begin position="276"/>
        <end position="296"/>
    </location>
</feature>
<feature type="transmembrane region" description="Helical" evidence="1">
    <location>
        <begin position="339"/>
        <end position="359"/>
    </location>
</feature>
<proteinExistence type="inferred from homology"/>
<organism>
    <name type="scientific">Staphylococcus carnosus (strain TM300)</name>
    <dbReference type="NCBI Taxonomy" id="396513"/>
    <lineage>
        <taxon>Bacteria</taxon>
        <taxon>Bacillati</taxon>
        <taxon>Bacillota</taxon>
        <taxon>Bacilli</taxon>
        <taxon>Bacillales</taxon>
        <taxon>Staphylococcaceae</taxon>
        <taxon>Staphylococcus</taxon>
    </lineage>
</organism>
<dbReference type="EMBL" id="AM295250">
    <property type="protein sequence ID" value="CAL29106.1"/>
    <property type="molecule type" value="Genomic_DNA"/>
</dbReference>
<dbReference type="SMR" id="B9DJQ6"/>
<dbReference type="KEGG" id="sca:SCA_2201"/>
<dbReference type="eggNOG" id="COG0201">
    <property type="taxonomic scope" value="Bacteria"/>
</dbReference>
<dbReference type="HOGENOM" id="CLU_030313_4_0_9"/>
<dbReference type="OrthoDB" id="2055747at2"/>
<dbReference type="BioCyc" id="SCAR396513:SCA_RS11115-MONOMER"/>
<dbReference type="Proteomes" id="UP000000444">
    <property type="component" value="Chromosome"/>
</dbReference>
<dbReference type="GO" id="GO:0005886">
    <property type="term" value="C:plasma membrane"/>
    <property type="evidence" value="ECO:0007669"/>
    <property type="project" value="UniProtKB-SubCell"/>
</dbReference>
<dbReference type="GO" id="GO:0065002">
    <property type="term" value="P:intracellular protein transmembrane transport"/>
    <property type="evidence" value="ECO:0007669"/>
    <property type="project" value="UniProtKB-UniRule"/>
</dbReference>
<dbReference type="GO" id="GO:0006605">
    <property type="term" value="P:protein targeting"/>
    <property type="evidence" value="ECO:0007669"/>
    <property type="project" value="UniProtKB-UniRule"/>
</dbReference>
<dbReference type="Gene3D" id="1.10.3370.10">
    <property type="entry name" value="SecY subunit domain"/>
    <property type="match status" value="1"/>
</dbReference>
<dbReference type="HAMAP" id="MF_01466">
    <property type="entry name" value="SecY2"/>
    <property type="match status" value="1"/>
</dbReference>
<dbReference type="InterPro" id="IPR002208">
    <property type="entry name" value="SecY/SEC61-alpha"/>
</dbReference>
<dbReference type="InterPro" id="IPR014269">
    <property type="entry name" value="SecY2"/>
</dbReference>
<dbReference type="InterPro" id="IPR023201">
    <property type="entry name" value="SecY_dom_sf"/>
</dbReference>
<dbReference type="NCBIfam" id="TIGR02920">
    <property type="entry name" value="acc_sec_Y2"/>
    <property type="match status" value="1"/>
</dbReference>
<dbReference type="NCBIfam" id="NF009082">
    <property type="entry name" value="PRK12417.1"/>
    <property type="match status" value="1"/>
</dbReference>
<dbReference type="PANTHER" id="PTHR10906">
    <property type="entry name" value="SECY/SEC61-ALPHA FAMILY MEMBER"/>
    <property type="match status" value="1"/>
</dbReference>
<dbReference type="Pfam" id="PF00344">
    <property type="entry name" value="SecY"/>
    <property type="match status" value="1"/>
</dbReference>
<dbReference type="PIRSF" id="PIRSF004557">
    <property type="entry name" value="SecY"/>
    <property type="match status" value="1"/>
</dbReference>
<dbReference type="PRINTS" id="PR00303">
    <property type="entry name" value="SECYTRNLCASE"/>
</dbReference>
<dbReference type="SUPFAM" id="SSF103491">
    <property type="entry name" value="Preprotein translocase SecY subunit"/>
    <property type="match status" value="1"/>
</dbReference>
<keyword id="KW-1003">Cell membrane</keyword>
<keyword id="KW-0472">Membrane</keyword>
<keyword id="KW-0653">Protein transport</keyword>
<keyword id="KW-1185">Reference proteome</keyword>
<keyword id="KW-0811">Translocation</keyword>
<keyword id="KW-0812">Transmembrane</keyword>
<keyword id="KW-1133">Transmembrane helix</keyword>
<keyword id="KW-0813">Transport</keyword>
<evidence type="ECO:0000255" key="1">
    <source>
        <dbReference type="HAMAP-Rule" id="MF_01466"/>
    </source>
</evidence>